<evidence type="ECO:0000255" key="1">
    <source>
        <dbReference type="HAMAP-Rule" id="MF_01542"/>
    </source>
</evidence>
<gene>
    <name type="ordered locus">SAS0809</name>
</gene>
<accession>Q6GAY7</accession>
<dbReference type="EMBL" id="BX571857">
    <property type="protein sequence ID" value="CAG42584.1"/>
    <property type="molecule type" value="Genomic_DNA"/>
</dbReference>
<dbReference type="RefSeq" id="WP_001068337.1">
    <property type="nucleotide sequence ID" value="NC_002953.3"/>
</dbReference>
<dbReference type="SMR" id="Q6GAY7"/>
<dbReference type="KEGG" id="sas:SAS0809"/>
<dbReference type="HOGENOM" id="CLU_182025_0_0_9"/>
<dbReference type="HAMAP" id="MF_01542">
    <property type="entry name" value="UPF0349"/>
    <property type="match status" value="1"/>
</dbReference>
<dbReference type="InterPro" id="IPR009910">
    <property type="entry name" value="DUF1450"/>
</dbReference>
<dbReference type="InterPro" id="IPR022916">
    <property type="entry name" value="UPF0349"/>
</dbReference>
<dbReference type="NCBIfam" id="NF010190">
    <property type="entry name" value="PRK13669.1"/>
    <property type="match status" value="1"/>
</dbReference>
<dbReference type="Pfam" id="PF07293">
    <property type="entry name" value="DUF1450"/>
    <property type="match status" value="1"/>
</dbReference>
<feature type="chain" id="PRO_0000165898" description="UPF0349 protein SAS0809">
    <location>
        <begin position="1"/>
        <end position="78"/>
    </location>
</feature>
<name>Y809_STAAS</name>
<comment type="similarity">
    <text evidence="1">Belongs to the UPF0349 family.</text>
</comment>
<reference key="1">
    <citation type="journal article" date="2004" name="Proc. Natl. Acad. Sci. U.S.A.">
        <title>Complete genomes of two clinical Staphylococcus aureus strains: evidence for the rapid evolution of virulence and drug resistance.</title>
        <authorList>
            <person name="Holden M.T.G."/>
            <person name="Feil E.J."/>
            <person name="Lindsay J.A."/>
            <person name="Peacock S.J."/>
            <person name="Day N.P.J."/>
            <person name="Enright M.C."/>
            <person name="Foster T.J."/>
            <person name="Moore C.E."/>
            <person name="Hurst L."/>
            <person name="Atkin R."/>
            <person name="Barron A."/>
            <person name="Bason N."/>
            <person name="Bentley S.D."/>
            <person name="Chillingworth C."/>
            <person name="Chillingworth T."/>
            <person name="Churcher C."/>
            <person name="Clark L."/>
            <person name="Corton C."/>
            <person name="Cronin A."/>
            <person name="Doggett J."/>
            <person name="Dowd L."/>
            <person name="Feltwell T."/>
            <person name="Hance Z."/>
            <person name="Harris B."/>
            <person name="Hauser H."/>
            <person name="Holroyd S."/>
            <person name="Jagels K."/>
            <person name="James K.D."/>
            <person name="Lennard N."/>
            <person name="Line A."/>
            <person name="Mayes R."/>
            <person name="Moule S."/>
            <person name="Mungall K."/>
            <person name="Ormond D."/>
            <person name="Quail M.A."/>
            <person name="Rabbinowitsch E."/>
            <person name="Rutherford K.M."/>
            <person name="Sanders M."/>
            <person name="Sharp S."/>
            <person name="Simmonds M."/>
            <person name="Stevens K."/>
            <person name="Whitehead S."/>
            <person name="Barrell B.G."/>
            <person name="Spratt B.G."/>
            <person name="Parkhill J."/>
        </authorList>
    </citation>
    <scope>NUCLEOTIDE SEQUENCE [LARGE SCALE GENOMIC DNA]</scope>
    <source>
        <strain>MSSA476</strain>
    </source>
</reference>
<proteinExistence type="inferred from homology"/>
<organism>
    <name type="scientific">Staphylococcus aureus (strain MSSA476)</name>
    <dbReference type="NCBI Taxonomy" id="282459"/>
    <lineage>
        <taxon>Bacteria</taxon>
        <taxon>Bacillati</taxon>
        <taxon>Bacillota</taxon>
        <taxon>Bacilli</taxon>
        <taxon>Bacillales</taxon>
        <taxon>Staphylococcaceae</taxon>
        <taxon>Staphylococcus</taxon>
    </lineage>
</organism>
<protein>
    <recommendedName>
        <fullName evidence="1">UPF0349 protein SAS0809</fullName>
    </recommendedName>
</protein>
<sequence length="78" mass="8657">MNPIVEFCLSNMAKGGDYVFNQLENDPDVDVLEYGCLTHCGICSAGLYALVNGDIVEGDSPEELLQNIYAHIKETWIF</sequence>